<feature type="chain" id="PRO_1000072124" description="Small ribosomal subunit protein eS27">
    <location>
        <begin position="1"/>
        <end position="62"/>
    </location>
</feature>
<feature type="zinc finger region" description="C4-type" evidence="1">
    <location>
        <begin position="17"/>
        <end position="39"/>
    </location>
</feature>
<feature type="binding site" evidence="1">
    <location>
        <position position="17"/>
    </location>
    <ligand>
        <name>Zn(2+)</name>
        <dbReference type="ChEBI" id="CHEBI:29105"/>
    </ligand>
</feature>
<feature type="binding site" evidence="1">
    <location>
        <position position="20"/>
    </location>
    <ligand>
        <name>Zn(2+)</name>
        <dbReference type="ChEBI" id="CHEBI:29105"/>
    </ligand>
</feature>
<feature type="binding site" evidence="1">
    <location>
        <position position="36"/>
    </location>
    <ligand>
        <name>Zn(2+)</name>
        <dbReference type="ChEBI" id="CHEBI:29105"/>
    </ligand>
</feature>
<feature type="binding site" evidence="1">
    <location>
        <position position="39"/>
    </location>
    <ligand>
        <name>Zn(2+)</name>
        <dbReference type="ChEBI" id="CHEBI:29105"/>
    </ligand>
</feature>
<sequence>MVQLTRENRSKFVKVKCPDCENEQTIFDRACTPVDCIVCGSNLATPTGGKAQIKAEIITAFE</sequence>
<proteinExistence type="inferred from homology"/>
<name>RS27_METHJ</name>
<dbReference type="EMBL" id="CP000254">
    <property type="protein sequence ID" value="ABD40878.1"/>
    <property type="molecule type" value="Genomic_DNA"/>
</dbReference>
<dbReference type="RefSeq" id="WP_011448156.1">
    <property type="nucleotide sequence ID" value="NC_007796.1"/>
</dbReference>
<dbReference type="SMR" id="Q2FPD4"/>
<dbReference type="FunCoup" id="Q2FPD4">
    <property type="interactions" value="124"/>
</dbReference>
<dbReference type="STRING" id="323259.Mhun_1129"/>
<dbReference type="EnsemblBacteria" id="ABD40878">
    <property type="protein sequence ID" value="ABD40878"/>
    <property type="gene ID" value="Mhun_1129"/>
</dbReference>
<dbReference type="GeneID" id="3922507"/>
<dbReference type="KEGG" id="mhu:Mhun_1129"/>
<dbReference type="eggNOG" id="arCOG04108">
    <property type="taxonomic scope" value="Archaea"/>
</dbReference>
<dbReference type="HOGENOM" id="CLU_199465_0_0_2"/>
<dbReference type="InParanoid" id="Q2FPD4"/>
<dbReference type="OrthoDB" id="5718at2157"/>
<dbReference type="Proteomes" id="UP000001941">
    <property type="component" value="Chromosome"/>
</dbReference>
<dbReference type="GO" id="GO:1990904">
    <property type="term" value="C:ribonucleoprotein complex"/>
    <property type="evidence" value="ECO:0007669"/>
    <property type="project" value="UniProtKB-KW"/>
</dbReference>
<dbReference type="GO" id="GO:0005840">
    <property type="term" value="C:ribosome"/>
    <property type="evidence" value="ECO:0007669"/>
    <property type="project" value="UniProtKB-KW"/>
</dbReference>
<dbReference type="GO" id="GO:0003735">
    <property type="term" value="F:structural constituent of ribosome"/>
    <property type="evidence" value="ECO:0007669"/>
    <property type="project" value="InterPro"/>
</dbReference>
<dbReference type="GO" id="GO:0008270">
    <property type="term" value="F:zinc ion binding"/>
    <property type="evidence" value="ECO:0007669"/>
    <property type="project" value="UniProtKB-UniRule"/>
</dbReference>
<dbReference type="GO" id="GO:0006412">
    <property type="term" value="P:translation"/>
    <property type="evidence" value="ECO:0007669"/>
    <property type="project" value="UniProtKB-UniRule"/>
</dbReference>
<dbReference type="Gene3D" id="2.20.25.100">
    <property type="entry name" value="Zn-binding ribosomal proteins"/>
    <property type="match status" value="1"/>
</dbReference>
<dbReference type="HAMAP" id="MF_00371">
    <property type="entry name" value="Ribosomal_eS27"/>
    <property type="match status" value="1"/>
</dbReference>
<dbReference type="InterPro" id="IPR000592">
    <property type="entry name" value="Ribosomal_eS27"/>
</dbReference>
<dbReference type="InterPro" id="IPR023407">
    <property type="entry name" value="Ribosomal_eS27_Zn-bd_dom_sf"/>
</dbReference>
<dbReference type="InterPro" id="IPR011332">
    <property type="entry name" value="Ribosomal_zn-bd"/>
</dbReference>
<dbReference type="NCBIfam" id="NF001629">
    <property type="entry name" value="PRK00415.1"/>
    <property type="match status" value="1"/>
</dbReference>
<dbReference type="Pfam" id="PF01667">
    <property type="entry name" value="Ribosomal_S27e"/>
    <property type="match status" value="1"/>
</dbReference>
<dbReference type="SUPFAM" id="SSF57829">
    <property type="entry name" value="Zn-binding ribosomal proteins"/>
    <property type="match status" value="1"/>
</dbReference>
<dbReference type="PROSITE" id="PS01168">
    <property type="entry name" value="RIBOSOMAL_S27E"/>
    <property type="match status" value="1"/>
</dbReference>
<evidence type="ECO:0000255" key="1">
    <source>
        <dbReference type="HAMAP-Rule" id="MF_00371"/>
    </source>
</evidence>
<evidence type="ECO:0000305" key="2"/>
<organism>
    <name type="scientific">Methanospirillum hungatei JF-1 (strain ATCC 27890 / DSM 864 / NBRC 100397 / JF-1)</name>
    <dbReference type="NCBI Taxonomy" id="323259"/>
    <lineage>
        <taxon>Archaea</taxon>
        <taxon>Methanobacteriati</taxon>
        <taxon>Methanobacteriota</taxon>
        <taxon>Stenosarchaea group</taxon>
        <taxon>Methanomicrobia</taxon>
        <taxon>Methanomicrobiales</taxon>
        <taxon>Methanospirillaceae</taxon>
        <taxon>Methanospirillum</taxon>
    </lineage>
</organism>
<comment type="cofactor">
    <cofactor evidence="1">
        <name>Zn(2+)</name>
        <dbReference type="ChEBI" id="CHEBI:29105"/>
    </cofactor>
    <text evidence="1">Binds 1 zinc ion per subunit.</text>
</comment>
<comment type="subunit">
    <text evidence="1">Part of the 30S ribosomal subunit.</text>
</comment>
<comment type="similarity">
    <text evidence="1">Belongs to the eukaryotic ribosomal protein eS27 family.</text>
</comment>
<protein>
    <recommendedName>
        <fullName evidence="1">Small ribosomal subunit protein eS27</fullName>
    </recommendedName>
    <alternativeName>
        <fullName evidence="2">30S ribosomal protein S27e</fullName>
    </alternativeName>
</protein>
<gene>
    <name evidence="1" type="primary">rps27e</name>
    <name type="ordered locus">Mhun_1129</name>
</gene>
<accession>Q2FPD4</accession>
<reference key="1">
    <citation type="journal article" date="2016" name="Stand. Genomic Sci.">
        <title>Complete genome sequence of Methanospirillum hungatei type strain JF1.</title>
        <authorList>
            <person name="Gunsalus R.P."/>
            <person name="Cook L.E."/>
            <person name="Crable B."/>
            <person name="Rohlin L."/>
            <person name="McDonald E."/>
            <person name="Mouttaki H."/>
            <person name="Sieber J.R."/>
            <person name="Poweleit N."/>
            <person name="Zhou H."/>
            <person name="Lapidus A.L."/>
            <person name="Daligault H.E."/>
            <person name="Land M."/>
            <person name="Gilna P."/>
            <person name="Ivanova N."/>
            <person name="Kyrpides N."/>
            <person name="Culley D.E."/>
            <person name="McInerney M.J."/>
        </authorList>
    </citation>
    <scope>NUCLEOTIDE SEQUENCE [LARGE SCALE GENOMIC DNA]</scope>
    <source>
        <strain>ATCC 27890 / DSM 864 / NBRC 100397 / JF-1</strain>
    </source>
</reference>
<keyword id="KW-0479">Metal-binding</keyword>
<keyword id="KW-1185">Reference proteome</keyword>
<keyword id="KW-0687">Ribonucleoprotein</keyword>
<keyword id="KW-0689">Ribosomal protein</keyword>
<keyword id="KW-0862">Zinc</keyword>
<keyword id="KW-0863">Zinc-finger</keyword>